<protein>
    <recommendedName>
        <fullName evidence="1">Peptide chain release factor 1</fullName>
        <shortName evidence="1">RF-1</shortName>
    </recommendedName>
</protein>
<name>RF1_CHLTB</name>
<evidence type="ECO:0000255" key="1">
    <source>
        <dbReference type="HAMAP-Rule" id="MF_00093"/>
    </source>
</evidence>
<evidence type="ECO:0000256" key="2">
    <source>
        <dbReference type="SAM" id="MobiDB-lite"/>
    </source>
</evidence>
<keyword id="KW-0963">Cytoplasm</keyword>
<keyword id="KW-0488">Methylation</keyword>
<keyword id="KW-0648">Protein biosynthesis</keyword>
<feature type="chain" id="PRO_1000093440" description="Peptide chain release factor 1">
    <location>
        <begin position="1"/>
        <end position="359"/>
    </location>
</feature>
<feature type="region of interest" description="Disordered" evidence="2">
    <location>
        <begin position="287"/>
        <end position="312"/>
    </location>
</feature>
<feature type="modified residue" description="N5-methylglutamine" evidence="1">
    <location>
        <position position="235"/>
    </location>
</feature>
<sequence>MEIKVLECLKRLEEVEKQISDPNIFSNPKEYSSLSKEHARLSEIKNAHESLVATKKILQDDKLALSTEKDPEIVAMLEEGVLVGEEAVERLSKQLENLLIPPDPDDDLSVIMELRAGTGGDEAALFVGDCVRMYHLYAASKGWQCEVLSASESDLGGYKEYVMGISGASVKRFLQYEAGTHRVQRVPETETQGRVHTSAVTVAVLPEPAEDDEEVFIDEKDLRIDTFRSSGAGGQHVNVTDSAVRITHIPSGVVVTCQDERSQHKNKAKAMRVLKARIRDAEVQKRAQEASAMRSAQVGSGDRSERIRTYNFPQNRVTDHRIGLTLYNLDRVMEGELDMITTALVTHVHRQLFGHEETA</sequence>
<dbReference type="EMBL" id="AM884177">
    <property type="protein sequence ID" value="CAP06671.1"/>
    <property type="molecule type" value="Genomic_DNA"/>
</dbReference>
<dbReference type="RefSeq" id="WP_009873501.1">
    <property type="nucleotide sequence ID" value="NC_010280.2"/>
</dbReference>
<dbReference type="SMR" id="B0BB09"/>
<dbReference type="KEGG" id="ctl:CTLon_0273"/>
<dbReference type="HOGENOM" id="CLU_036856_0_1_0"/>
<dbReference type="Proteomes" id="UP001154401">
    <property type="component" value="Chromosome"/>
</dbReference>
<dbReference type="GO" id="GO:0005737">
    <property type="term" value="C:cytoplasm"/>
    <property type="evidence" value="ECO:0007669"/>
    <property type="project" value="UniProtKB-SubCell"/>
</dbReference>
<dbReference type="GO" id="GO:0016149">
    <property type="term" value="F:translation release factor activity, codon specific"/>
    <property type="evidence" value="ECO:0007669"/>
    <property type="project" value="UniProtKB-UniRule"/>
</dbReference>
<dbReference type="FunFam" id="3.30.160.20:FF:000004">
    <property type="entry name" value="Peptide chain release factor 1"/>
    <property type="match status" value="1"/>
</dbReference>
<dbReference type="FunFam" id="3.30.70.1660:FF:000002">
    <property type="entry name" value="Peptide chain release factor 1"/>
    <property type="match status" value="1"/>
</dbReference>
<dbReference type="FunFam" id="3.30.70.1660:FF:000004">
    <property type="entry name" value="Peptide chain release factor 1"/>
    <property type="match status" value="1"/>
</dbReference>
<dbReference type="Gene3D" id="3.30.160.20">
    <property type="match status" value="1"/>
</dbReference>
<dbReference type="Gene3D" id="3.30.70.1660">
    <property type="match status" value="1"/>
</dbReference>
<dbReference type="Gene3D" id="6.10.140.1950">
    <property type="match status" value="1"/>
</dbReference>
<dbReference type="HAMAP" id="MF_00093">
    <property type="entry name" value="Rel_fac_1"/>
    <property type="match status" value="1"/>
</dbReference>
<dbReference type="InterPro" id="IPR005139">
    <property type="entry name" value="PCRF"/>
</dbReference>
<dbReference type="InterPro" id="IPR000352">
    <property type="entry name" value="Pep_chain_release_fac_I"/>
</dbReference>
<dbReference type="InterPro" id="IPR045853">
    <property type="entry name" value="Pep_chain_release_fac_I_sf"/>
</dbReference>
<dbReference type="InterPro" id="IPR050057">
    <property type="entry name" value="Prokaryotic/Mito_RF"/>
</dbReference>
<dbReference type="InterPro" id="IPR004373">
    <property type="entry name" value="RF-1"/>
</dbReference>
<dbReference type="NCBIfam" id="TIGR00019">
    <property type="entry name" value="prfA"/>
    <property type="match status" value="1"/>
</dbReference>
<dbReference type="NCBIfam" id="NF001859">
    <property type="entry name" value="PRK00591.1"/>
    <property type="match status" value="1"/>
</dbReference>
<dbReference type="PANTHER" id="PTHR43804">
    <property type="entry name" value="LD18447P"/>
    <property type="match status" value="1"/>
</dbReference>
<dbReference type="PANTHER" id="PTHR43804:SF7">
    <property type="entry name" value="LD18447P"/>
    <property type="match status" value="1"/>
</dbReference>
<dbReference type="Pfam" id="PF03462">
    <property type="entry name" value="PCRF"/>
    <property type="match status" value="1"/>
</dbReference>
<dbReference type="Pfam" id="PF00472">
    <property type="entry name" value="RF-1"/>
    <property type="match status" value="1"/>
</dbReference>
<dbReference type="SMART" id="SM00937">
    <property type="entry name" value="PCRF"/>
    <property type="match status" value="1"/>
</dbReference>
<dbReference type="SUPFAM" id="SSF75620">
    <property type="entry name" value="Release factor"/>
    <property type="match status" value="1"/>
</dbReference>
<dbReference type="PROSITE" id="PS00745">
    <property type="entry name" value="RF_PROK_I"/>
    <property type="match status" value="1"/>
</dbReference>
<accession>B0BB09</accession>
<comment type="function">
    <text evidence="1">Peptide chain release factor 1 directs the termination of translation in response to the peptide chain termination codons UAG and UAA.</text>
</comment>
<comment type="subcellular location">
    <subcellularLocation>
        <location evidence="1">Cytoplasm</location>
    </subcellularLocation>
</comment>
<comment type="PTM">
    <text evidence="1">Methylated by PrmC. Methylation increases the termination efficiency of RF1.</text>
</comment>
<comment type="similarity">
    <text evidence="1">Belongs to the prokaryotic/mitochondrial release factor family.</text>
</comment>
<proteinExistence type="inferred from homology"/>
<gene>
    <name evidence="1" type="primary">prfA</name>
    <name type="ordered locus">CTLon_0273</name>
</gene>
<reference key="1">
    <citation type="journal article" date="2008" name="Genome Res.">
        <title>Chlamydia trachomatis: genome sequence analysis of lymphogranuloma venereum isolates.</title>
        <authorList>
            <person name="Thomson N.R."/>
            <person name="Holden M.T.G."/>
            <person name="Carder C."/>
            <person name="Lennard N."/>
            <person name="Lockey S.J."/>
            <person name="Marsh P."/>
            <person name="Skipp P."/>
            <person name="O'Connor C.D."/>
            <person name="Goodhead I."/>
            <person name="Norbertzcak H."/>
            <person name="Harris B."/>
            <person name="Ormond D."/>
            <person name="Rance R."/>
            <person name="Quail M.A."/>
            <person name="Parkhill J."/>
            <person name="Stephens R.S."/>
            <person name="Clarke I.N."/>
        </authorList>
    </citation>
    <scope>NUCLEOTIDE SEQUENCE [LARGE SCALE GENOMIC DNA]</scope>
    <source>
        <strain>UCH-1/proctitis</strain>
    </source>
</reference>
<organism>
    <name type="scientific">Chlamydia trachomatis serovar L2b (strain UCH-1/proctitis)</name>
    <dbReference type="NCBI Taxonomy" id="471473"/>
    <lineage>
        <taxon>Bacteria</taxon>
        <taxon>Pseudomonadati</taxon>
        <taxon>Chlamydiota</taxon>
        <taxon>Chlamydiia</taxon>
        <taxon>Chlamydiales</taxon>
        <taxon>Chlamydiaceae</taxon>
        <taxon>Chlamydia/Chlamydophila group</taxon>
        <taxon>Chlamydia</taxon>
    </lineage>
</organism>